<gene>
    <name evidence="1" type="primary">pdxT</name>
    <name type="ordered locus">Cgl0789</name>
    <name type="ordered locus">cg0899</name>
</gene>
<sequence length="200" mass="21272">MIVGVLALQGGVEEHLTALEALGATTRKVRVPKDLDGLEGIVIPGGESTVLDKLARTFDVVEPLANLIRDGLPVFATCAGLIYLAKHLDNPARGQQTLAVVDVVVRRNAFGAQRESFDTTVDVSFDGATFPGVQASFIRAPIVTAFGPTVEAIAALNGGEVVGVRQGNIIALSFHPEETGDYRIHQAWLDLVRKHAELAI</sequence>
<organism>
    <name type="scientific">Corynebacterium glutamicum (strain ATCC 13032 / DSM 20300 / JCM 1318 / BCRC 11384 / CCUG 27702 / LMG 3730 / NBRC 12168 / NCIMB 10025 / NRRL B-2784 / 534)</name>
    <dbReference type="NCBI Taxonomy" id="196627"/>
    <lineage>
        <taxon>Bacteria</taxon>
        <taxon>Bacillati</taxon>
        <taxon>Actinomycetota</taxon>
        <taxon>Actinomycetes</taxon>
        <taxon>Mycobacteriales</taxon>
        <taxon>Corynebacteriaceae</taxon>
        <taxon>Corynebacterium</taxon>
    </lineage>
</organism>
<keyword id="KW-0315">Glutamine amidotransferase</keyword>
<keyword id="KW-0378">Hydrolase</keyword>
<keyword id="KW-0456">Lyase</keyword>
<keyword id="KW-0663">Pyridoxal phosphate</keyword>
<keyword id="KW-1185">Reference proteome</keyword>
<comment type="function">
    <text evidence="1">Catalyzes the hydrolysis of glutamine to glutamate and ammonia as part of the biosynthesis of pyridoxal 5'-phosphate. The resulting ammonia molecule is channeled to the active site of PdxS.</text>
</comment>
<comment type="catalytic activity">
    <reaction evidence="1">
        <text>aldehydo-D-ribose 5-phosphate + D-glyceraldehyde 3-phosphate + L-glutamine = pyridoxal 5'-phosphate + L-glutamate + phosphate + 3 H2O + H(+)</text>
        <dbReference type="Rhea" id="RHEA:31507"/>
        <dbReference type="ChEBI" id="CHEBI:15377"/>
        <dbReference type="ChEBI" id="CHEBI:15378"/>
        <dbReference type="ChEBI" id="CHEBI:29985"/>
        <dbReference type="ChEBI" id="CHEBI:43474"/>
        <dbReference type="ChEBI" id="CHEBI:58273"/>
        <dbReference type="ChEBI" id="CHEBI:58359"/>
        <dbReference type="ChEBI" id="CHEBI:59776"/>
        <dbReference type="ChEBI" id="CHEBI:597326"/>
        <dbReference type="EC" id="4.3.3.6"/>
    </reaction>
</comment>
<comment type="catalytic activity">
    <reaction evidence="1">
        <text>L-glutamine + H2O = L-glutamate + NH4(+)</text>
        <dbReference type="Rhea" id="RHEA:15889"/>
        <dbReference type="ChEBI" id="CHEBI:15377"/>
        <dbReference type="ChEBI" id="CHEBI:28938"/>
        <dbReference type="ChEBI" id="CHEBI:29985"/>
        <dbReference type="ChEBI" id="CHEBI:58359"/>
        <dbReference type="EC" id="3.5.1.2"/>
    </reaction>
</comment>
<comment type="pathway">
    <text evidence="1">Cofactor biosynthesis; pyridoxal 5'-phosphate biosynthesis.</text>
</comment>
<comment type="subunit">
    <text evidence="1">In the presence of PdxS, forms a dodecamer of heterodimers. Only shows activity in the heterodimer.</text>
</comment>
<comment type="similarity">
    <text evidence="1">Belongs to the glutaminase PdxT/SNO family.</text>
</comment>
<accession>Q8NS90</accession>
<accession>Q6M6Z4</accession>
<evidence type="ECO:0000255" key="1">
    <source>
        <dbReference type="HAMAP-Rule" id="MF_01615"/>
    </source>
</evidence>
<reference key="1">
    <citation type="journal article" date="2003" name="Appl. Microbiol. Biotechnol.">
        <title>The Corynebacterium glutamicum genome: features and impacts on biotechnological processes.</title>
        <authorList>
            <person name="Ikeda M."/>
            <person name="Nakagawa S."/>
        </authorList>
    </citation>
    <scope>NUCLEOTIDE SEQUENCE [LARGE SCALE GENOMIC DNA]</scope>
    <source>
        <strain>ATCC 13032 / DSM 20300 / JCM 1318 / BCRC 11384 / CCUG 27702 / LMG 3730 / NBRC 12168 / NCIMB 10025 / NRRL B-2784 / 534</strain>
    </source>
</reference>
<reference key="2">
    <citation type="journal article" date="2003" name="J. Biotechnol.">
        <title>The complete Corynebacterium glutamicum ATCC 13032 genome sequence and its impact on the production of L-aspartate-derived amino acids and vitamins.</title>
        <authorList>
            <person name="Kalinowski J."/>
            <person name="Bathe B."/>
            <person name="Bartels D."/>
            <person name="Bischoff N."/>
            <person name="Bott M."/>
            <person name="Burkovski A."/>
            <person name="Dusch N."/>
            <person name="Eggeling L."/>
            <person name="Eikmanns B.J."/>
            <person name="Gaigalat L."/>
            <person name="Goesmann A."/>
            <person name="Hartmann M."/>
            <person name="Huthmacher K."/>
            <person name="Kraemer R."/>
            <person name="Linke B."/>
            <person name="McHardy A.C."/>
            <person name="Meyer F."/>
            <person name="Moeckel B."/>
            <person name="Pfefferle W."/>
            <person name="Puehler A."/>
            <person name="Rey D.A."/>
            <person name="Rueckert C."/>
            <person name="Rupp O."/>
            <person name="Sahm H."/>
            <person name="Wendisch V.F."/>
            <person name="Wiegraebe I."/>
            <person name="Tauch A."/>
        </authorList>
    </citation>
    <scope>NUCLEOTIDE SEQUENCE [LARGE SCALE GENOMIC DNA]</scope>
    <source>
        <strain>ATCC 13032 / DSM 20300 / JCM 1318 / BCRC 11384 / CCUG 27702 / LMG 3730 / NBRC 12168 / NCIMB 10025 / NRRL B-2784 / 534</strain>
    </source>
</reference>
<name>PDXT_CORGL</name>
<protein>
    <recommendedName>
        <fullName evidence="1">Pyridoxal 5'-phosphate synthase subunit PdxT</fullName>
        <ecNumber evidence="1">4.3.3.6</ecNumber>
    </recommendedName>
    <alternativeName>
        <fullName evidence="1">Pdx2</fullName>
    </alternativeName>
    <alternativeName>
        <fullName evidence="1">Pyridoxal 5'-phosphate synthase glutaminase subunit</fullName>
        <ecNumber evidence="1">3.5.1.2</ecNumber>
    </alternativeName>
</protein>
<dbReference type="EC" id="4.3.3.6" evidence="1"/>
<dbReference type="EC" id="3.5.1.2" evidence="1"/>
<dbReference type="EMBL" id="BA000036">
    <property type="protein sequence ID" value="BAB98182.1"/>
    <property type="molecule type" value="Genomic_DNA"/>
</dbReference>
<dbReference type="EMBL" id="BX927150">
    <property type="protein sequence ID" value="CAF19494.1"/>
    <property type="molecule type" value="Genomic_DNA"/>
</dbReference>
<dbReference type="RefSeq" id="NP_600017.1">
    <property type="nucleotide sequence ID" value="NC_003450.3"/>
</dbReference>
<dbReference type="RefSeq" id="WP_011013889.1">
    <property type="nucleotide sequence ID" value="NC_006958.1"/>
</dbReference>
<dbReference type="SMR" id="Q8NS90"/>
<dbReference type="STRING" id="196627.cg0899"/>
<dbReference type="GeneID" id="1018784"/>
<dbReference type="KEGG" id="cgb:cg0899"/>
<dbReference type="KEGG" id="cgl:Cgl0789"/>
<dbReference type="PATRIC" id="fig|196627.13.peg.774"/>
<dbReference type="eggNOG" id="COG0311">
    <property type="taxonomic scope" value="Bacteria"/>
</dbReference>
<dbReference type="HOGENOM" id="CLU_069674_2_0_11"/>
<dbReference type="OrthoDB" id="9810320at2"/>
<dbReference type="BioCyc" id="CORYNE:G18NG-10351-MONOMER"/>
<dbReference type="UniPathway" id="UPA00245"/>
<dbReference type="Proteomes" id="UP000000582">
    <property type="component" value="Chromosome"/>
</dbReference>
<dbReference type="Proteomes" id="UP000001009">
    <property type="component" value="Chromosome"/>
</dbReference>
<dbReference type="GO" id="GO:0005829">
    <property type="term" value="C:cytosol"/>
    <property type="evidence" value="ECO:0007669"/>
    <property type="project" value="TreeGrafter"/>
</dbReference>
<dbReference type="GO" id="GO:1903600">
    <property type="term" value="C:glutaminase complex"/>
    <property type="evidence" value="ECO:0007669"/>
    <property type="project" value="TreeGrafter"/>
</dbReference>
<dbReference type="GO" id="GO:0004359">
    <property type="term" value="F:glutaminase activity"/>
    <property type="evidence" value="ECO:0007669"/>
    <property type="project" value="UniProtKB-UniRule"/>
</dbReference>
<dbReference type="GO" id="GO:0036381">
    <property type="term" value="F:pyridoxal 5'-phosphate synthase (glutamine hydrolysing) activity"/>
    <property type="evidence" value="ECO:0007669"/>
    <property type="project" value="UniProtKB-UniRule"/>
</dbReference>
<dbReference type="GO" id="GO:0006543">
    <property type="term" value="P:glutamine catabolic process"/>
    <property type="evidence" value="ECO:0007669"/>
    <property type="project" value="UniProtKB-UniRule"/>
</dbReference>
<dbReference type="GO" id="GO:0042823">
    <property type="term" value="P:pyridoxal phosphate biosynthetic process"/>
    <property type="evidence" value="ECO:0007669"/>
    <property type="project" value="UniProtKB-UniRule"/>
</dbReference>
<dbReference type="GO" id="GO:0008614">
    <property type="term" value="P:pyridoxine metabolic process"/>
    <property type="evidence" value="ECO:0007669"/>
    <property type="project" value="TreeGrafter"/>
</dbReference>
<dbReference type="GO" id="GO:0009432">
    <property type="term" value="P:SOS response"/>
    <property type="evidence" value="ECO:0000269"/>
    <property type="project" value="CollecTF"/>
</dbReference>
<dbReference type="CDD" id="cd01749">
    <property type="entry name" value="GATase1_PB"/>
    <property type="match status" value="1"/>
</dbReference>
<dbReference type="FunFam" id="3.40.50.880:FF:000010">
    <property type="entry name" value="uncharacterized protein LOC100176842 isoform X2"/>
    <property type="match status" value="1"/>
</dbReference>
<dbReference type="Gene3D" id="3.40.50.880">
    <property type="match status" value="1"/>
</dbReference>
<dbReference type="HAMAP" id="MF_01615">
    <property type="entry name" value="PdxT"/>
    <property type="match status" value="1"/>
</dbReference>
<dbReference type="InterPro" id="IPR029062">
    <property type="entry name" value="Class_I_gatase-like"/>
</dbReference>
<dbReference type="InterPro" id="IPR002161">
    <property type="entry name" value="PdxT/SNO"/>
</dbReference>
<dbReference type="InterPro" id="IPR021196">
    <property type="entry name" value="PdxT/SNO_CS"/>
</dbReference>
<dbReference type="NCBIfam" id="TIGR03800">
    <property type="entry name" value="PLP_synth_Pdx2"/>
    <property type="match status" value="1"/>
</dbReference>
<dbReference type="PANTHER" id="PTHR31559">
    <property type="entry name" value="PYRIDOXAL 5'-PHOSPHATE SYNTHASE SUBUNIT SNO"/>
    <property type="match status" value="1"/>
</dbReference>
<dbReference type="PANTHER" id="PTHR31559:SF0">
    <property type="entry name" value="PYRIDOXAL 5'-PHOSPHATE SYNTHASE SUBUNIT SNO1-RELATED"/>
    <property type="match status" value="1"/>
</dbReference>
<dbReference type="Pfam" id="PF01174">
    <property type="entry name" value="SNO"/>
    <property type="match status" value="1"/>
</dbReference>
<dbReference type="PIRSF" id="PIRSF005639">
    <property type="entry name" value="Glut_amidoT_SNO"/>
    <property type="match status" value="1"/>
</dbReference>
<dbReference type="SUPFAM" id="SSF52317">
    <property type="entry name" value="Class I glutamine amidotransferase-like"/>
    <property type="match status" value="1"/>
</dbReference>
<dbReference type="PROSITE" id="PS01236">
    <property type="entry name" value="PDXT_SNO_1"/>
    <property type="match status" value="1"/>
</dbReference>
<dbReference type="PROSITE" id="PS51130">
    <property type="entry name" value="PDXT_SNO_2"/>
    <property type="match status" value="1"/>
</dbReference>
<feature type="chain" id="PRO_0000135636" description="Pyridoxal 5'-phosphate synthase subunit PdxT">
    <location>
        <begin position="1"/>
        <end position="200"/>
    </location>
</feature>
<feature type="active site" description="Nucleophile" evidence="1">
    <location>
        <position position="78"/>
    </location>
</feature>
<feature type="active site" description="Charge relay system" evidence="1">
    <location>
        <position position="175"/>
    </location>
</feature>
<feature type="active site" description="Charge relay system" evidence="1">
    <location>
        <position position="177"/>
    </location>
</feature>
<feature type="binding site" evidence="1">
    <location>
        <begin position="46"/>
        <end position="48"/>
    </location>
    <ligand>
        <name>L-glutamine</name>
        <dbReference type="ChEBI" id="CHEBI:58359"/>
    </ligand>
</feature>
<feature type="binding site" evidence="1">
    <location>
        <position position="107"/>
    </location>
    <ligand>
        <name>L-glutamine</name>
        <dbReference type="ChEBI" id="CHEBI:58359"/>
    </ligand>
</feature>
<feature type="binding site" evidence="1">
    <location>
        <begin position="138"/>
        <end position="139"/>
    </location>
    <ligand>
        <name>L-glutamine</name>
        <dbReference type="ChEBI" id="CHEBI:58359"/>
    </ligand>
</feature>
<proteinExistence type="inferred from homology"/>